<organism>
    <name type="scientific">Rattus norvegicus</name>
    <name type="common">Rat</name>
    <dbReference type="NCBI Taxonomy" id="10116"/>
    <lineage>
        <taxon>Eukaryota</taxon>
        <taxon>Metazoa</taxon>
        <taxon>Chordata</taxon>
        <taxon>Craniata</taxon>
        <taxon>Vertebrata</taxon>
        <taxon>Euteleostomi</taxon>
        <taxon>Mammalia</taxon>
        <taxon>Eutheria</taxon>
        <taxon>Euarchontoglires</taxon>
        <taxon>Glires</taxon>
        <taxon>Rodentia</taxon>
        <taxon>Myomorpha</taxon>
        <taxon>Muroidea</taxon>
        <taxon>Muridae</taxon>
        <taxon>Murinae</taxon>
        <taxon>Rattus</taxon>
    </lineage>
</organism>
<name>CH25H_RAT</name>
<comment type="function">
    <text evidence="1 2 4 5">Catalyzes the formation of 25-hydroxycholesterol from cholesterol, leading to repress cholesterol biosynthetic enzymes (PubMed:11207193, PubMed:11967195). Plays a key role in cell positioning and movement in lymphoid tissues: 25-hydroxycholesterol is an intermediate in biosynthesis of 7-alpha,25-dihydroxycholesterol (7-alpha,25-OHC), an oxysterol that acts as a ligand for the G protein-coupled receptor GPR183/EBI2, a chemotactic receptor for a number of lymphoid cells. May play an important role in regulating lipid metabolism by synthesizing a corepressor that blocks sterol regulatory element binding protein (SREBP) processing. In testis, production of 25-hydroxycholesterol by macrophages plays a role in Leydig cell differentiation (PubMed:11207193, PubMed:11967195). Required to restrain inflammation in macrophages: production of 25-hydroxycholesterol protects macrophages from cholesterol overload, thereby preventing mitochondrial DNA release and subsequent activation of the AIM2 inflammasome (By similarity). Interferon-stimulated gene which has broad antiviral activities against a wide range of enveloped viruses (By similarity).</text>
</comment>
<comment type="function">
    <text evidence="1 2 4 5">Catalyzes the formation of 25-hydroxycholesterol from cholesterol, leading to repress cholesterol biosynthetic enzymes (By similarity). Plays a key role in cell positioning and movement in lymphoid tissues: 25-hydroxycholesterol is an intermediate in biosynthesis of 7-alpha,25-dihydroxycholesterol (7-alpha,25-OHC), an oxysterol that acts as a ligand for the G protein-coupled receptor GPR183/EBI2, a chemotactic receptor for a number of lymphoid cells (By similarity). May play an important role in regulating lipid metabolism by synthesizing a corepressor that blocks sterol regulatory element binding protein (SREBP) processing. As an interferon-stimulated gene, has broad antiviral activities against a wide range of enveloped viruses. Its product, 25-hydroxycholesterol, activates the ER-localized enzyme ACAT to induce internalization of accessible cholesterol on the plasma membrane and restricts virus-host membranes fusion which inhibits virus replication (By similarity). In testis, production of 25-hydroxycholesterol by macrophages plays a role in Leydig cell differentiation (PubMed:11207193, PubMed:11967195).</text>
</comment>
<comment type="catalytic activity">
    <reaction evidence="2">
        <text>cholesterol + AH2 + O2 = 25-hydroxycholesterol + A + H2O</text>
        <dbReference type="Rhea" id="RHEA:21104"/>
        <dbReference type="ChEBI" id="CHEBI:13193"/>
        <dbReference type="ChEBI" id="CHEBI:15377"/>
        <dbReference type="ChEBI" id="CHEBI:15379"/>
        <dbReference type="ChEBI" id="CHEBI:16113"/>
        <dbReference type="ChEBI" id="CHEBI:17499"/>
        <dbReference type="ChEBI" id="CHEBI:42977"/>
        <dbReference type="EC" id="1.14.99.38"/>
    </reaction>
    <physiologicalReaction direction="left-to-right" evidence="2">
        <dbReference type="Rhea" id="RHEA:21105"/>
    </physiologicalReaction>
</comment>
<comment type="catalytic activity">
    <reaction evidence="2">
        <text>cholesterol + NADPH + O2 + H(+) = 25-hydroxycholesterol + NADP(+) + H2O</text>
        <dbReference type="Rhea" id="RHEA:46132"/>
        <dbReference type="ChEBI" id="CHEBI:15377"/>
        <dbReference type="ChEBI" id="CHEBI:15378"/>
        <dbReference type="ChEBI" id="CHEBI:15379"/>
        <dbReference type="ChEBI" id="CHEBI:16113"/>
        <dbReference type="ChEBI" id="CHEBI:42977"/>
        <dbReference type="ChEBI" id="CHEBI:57783"/>
        <dbReference type="ChEBI" id="CHEBI:58349"/>
    </reaction>
    <physiologicalReaction direction="left-to-right" evidence="2">
        <dbReference type="Rhea" id="RHEA:46133"/>
    </physiologicalReaction>
</comment>
<comment type="cofactor">
    <cofactor evidence="2">
        <name>Fe cation</name>
        <dbReference type="ChEBI" id="CHEBI:24875"/>
    </cofactor>
</comment>
<comment type="subcellular location">
    <subcellularLocation>
        <location evidence="2">Endoplasmic reticulum membrane</location>
        <topology evidence="2">Multi-pass membrane protein</topology>
    </subcellularLocation>
</comment>
<comment type="tissue specificity">
    <text evidence="4 5">Expressed in testicular macrophages at all stages, with the highest level in 10 day old animals.</text>
</comment>
<comment type="induction">
    <text evidence="6">Down-regulated by testosterone.</text>
</comment>
<comment type="PTM">
    <text evidence="2">N-glycosylated.</text>
</comment>
<comment type="similarity">
    <text evidence="7">Belongs to the sterol desaturase family.</text>
</comment>
<accession>Q4QQV7</accession>
<proteinExistence type="evidence at transcript level"/>
<dbReference type="EC" id="1.14.99.38" evidence="2"/>
<dbReference type="EMBL" id="BC097964">
    <property type="protein sequence ID" value="AAH97964.1"/>
    <property type="molecule type" value="mRNA"/>
</dbReference>
<dbReference type="RefSeq" id="NP_001020586.1">
    <property type="nucleotide sequence ID" value="NM_001025415.1"/>
</dbReference>
<dbReference type="RefSeq" id="XP_006231353.1">
    <property type="nucleotide sequence ID" value="XM_006231291.3"/>
</dbReference>
<dbReference type="FunCoup" id="Q4QQV7">
    <property type="interactions" value="4"/>
</dbReference>
<dbReference type="STRING" id="10116.ENSRNOP00000025856"/>
<dbReference type="GlyCosmos" id="Q4QQV7">
    <property type="glycosylation" value="2 sites, No reported glycans"/>
</dbReference>
<dbReference type="GlyGen" id="Q4QQV7">
    <property type="glycosylation" value="2 sites"/>
</dbReference>
<dbReference type="PaxDb" id="10116-ENSRNOP00000025856"/>
<dbReference type="Ensembl" id="ENSRNOT00000025856.4">
    <property type="protein sequence ID" value="ENSRNOP00000025856.1"/>
    <property type="gene ID" value="ENSRNOG00000019141.4"/>
</dbReference>
<dbReference type="GeneID" id="309527"/>
<dbReference type="KEGG" id="rno:309527"/>
<dbReference type="UCSC" id="RGD:1310575">
    <property type="organism name" value="rat"/>
</dbReference>
<dbReference type="AGR" id="RGD:1310575"/>
<dbReference type="CTD" id="9023"/>
<dbReference type="RGD" id="1310575">
    <property type="gene designation" value="Ch25h"/>
</dbReference>
<dbReference type="eggNOG" id="KOG0873">
    <property type="taxonomic scope" value="Eukaryota"/>
</dbReference>
<dbReference type="GeneTree" id="ENSGT00940000162142"/>
<dbReference type="HOGENOM" id="CLU_047036_5_1_1"/>
<dbReference type="InParanoid" id="Q4QQV7"/>
<dbReference type="OMA" id="VPWLYKT"/>
<dbReference type="OrthoDB" id="64808at9989"/>
<dbReference type="PhylomeDB" id="Q4QQV7"/>
<dbReference type="TreeFam" id="TF353265"/>
<dbReference type="BRENDA" id="1.14.99.38">
    <property type="organism ID" value="5301"/>
</dbReference>
<dbReference type="Reactome" id="R-RNO-192105">
    <property type="pathway name" value="Synthesis of bile acids and bile salts"/>
</dbReference>
<dbReference type="PRO" id="PR:Q4QQV7"/>
<dbReference type="Proteomes" id="UP000002494">
    <property type="component" value="Chromosome 1"/>
</dbReference>
<dbReference type="Bgee" id="ENSRNOG00000019141">
    <property type="expression patterns" value="Expressed in lung and 18 other cell types or tissues"/>
</dbReference>
<dbReference type="GO" id="GO:0005789">
    <property type="term" value="C:endoplasmic reticulum membrane"/>
    <property type="evidence" value="ECO:0000318"/>
    <property type="project" value="GO_Central"/>
</dbReference>
<dbReference type="GO" id="GO:0000254">
    <property type="term" value="F:C-4 methylsterol oxidase activity"/>
    <property type="evidence" value="ECO:0000318"/>
    <property type="project" value="GO_Central"/>
</dbReference>
<dbReference type="GO" id="GO:0001567">
    <property type="term" value="F:cholesterol 25-hydroxylase activity"/>
    <property type="evidence" value="ECO:0000250"/>
    <property type="project" value="UniProtKB"/>
</dbReference>
<dbReference type="GO" id="GO:0005506">
    <property type="term" value="F:iron ion binding"/>
    <property type="evidence" value="ECO:0007669"/>
    <property type="project" value="InterPro"/>
</dbReference>
<dbReference type="GO" id="GO:0008395">
    <property type="term" value="F:steroid hydroxylase activity"/>
    <property type="evidence" value="ECO:0000266"/>
    <property type="project" value="RGD"/>
</dbReference>
<dbReference type="GO" id="GO:0035754">
    <property type="term" value="P:B cell chemotaxis"/>
    <property type="evidence" value="ECO:0000250"/>
    <property type="project" value="UniProtKB"/>
</dbReference>
<dbReference type="GO" id="GO:0008203">
    <property type="term" value="P:cholesterol metabolic process"/>
    <property type="evidence" value="ECO:0000250"/>
    <property type="project" value="UniProtKB"/>
</dbReference>
<dbReference type="GO" id="GO:0090206">
    <property type="term" value="P:negative regulation of cholesterol metabolic process"/>
    <property type="evidence" value="ECO:0000266"/>
    <property type="project" value="RGD"/>
</dbReference>
<dbReference type="GO" id="GO:1903914">
    <property type="term" value="P:negative regulation of fusion of virus membrane with host plasma membrane"/>
    <property type="evidence" value="ECO:0000250"/>
    <property type="project" value="UniProtKB"/>
</dbReference>
<dbReference type="GO" id="GO:0034340">
    <property type="term" value="P:response to type I interferon"/>
    <property type="evidence" value="ECO:0000250"/>
    <property type="project" value="UniProtKB"/>
</dbReference>
<dbReference type="GO" id="GO:0016126">
    <property type="term" value="P:sterol biosynthetic process"/>
    <property type="evidence" value="ECO:0000318"/>
    <property type="project" value="GO_Central"/>
</dbReference>
<dbReference type="InterPro" id="IPR006694">
    <property type="entry name" value="Fatty_acid_hydroxylase"/>
</dbReference>
<dbReference type="InterPro" id="IPR050307">
    <property type="entry name" value="Sterol_Desaturase_Related"/>
</dbReference>
<dbReference type="PANTHER" id="PTHR11863">
    <property type="entry name" value="STEROL DESATURASE"/>
    <property type="match status" value="1"/>
</dbReference>
<dbReference type="Pfam" id="PF04116">
    <property type="entry name" value="FA_hydroxylase"/>
    <property type="match status" value="1"/>
</dbReference>
<reference key="1">
    <citation type="journal article" date="2004" name="Genome Res.">
        <title>The status, quality, and expansion of the NIH full-length cDNA project: the Mammalian Gene Collection (MGC).</title>
        <authorList>
            <consortium name="The MGC Project Team"/>
        </authorList>
    </citation>
    <scope>NUCLEOTIDE SEQUENCE [LARGE SCALE MRNA]</scope>
    <source>
        <tissue>Thymus</tissue>
    </source>
</reference>
<reference key="2">
    <citation type="journal article" date="2001" name="Biol. Reprod.">
        <title>Production of 25-hydroxycholesterol by testicular macrophages and its effects on Leydig cells.</title>
        <authorList>
            <person name="Lukyanenko Y.O."/>
            <person name="Chen J.-J."/>
            <person name="Hutson J.C."/>
        </authorList>
    </citation>
    <scope>TISSUE SPECIFICITY</scope>
    <scope>FUNCTION</scope>
</reference>
<reference key="3">
    <citation type="journal article" date="2002" name="Biol. Reprod.">
        <title>25-hydroxycholesterol is produced by testicular macrophages during the early postnatal period and influences differentiation of Leydig cells in vitro.</title>
        <authorList>
            <person name="Chen J.-J."/>
            <person name="Lukyanenko Y."/>
            <person name="Hutson J.C."/>
        </authorList>
    </citation>
    <scope>TISSUE SPECIFICITY</scope>
    <scope>FUNCTION</scope>
</reference>
<reference key="4">
    <citation type="journal article" date="2002" name="Biol. Reprod.">
        <title>Testosterone regulates 25-hydroxycholesterol production in testicular macrophages.</title>
        <authorList>
            <person name="Lukyanenko Y."/>
            <person name="Chen J.-J."/>
            <person name="Hutson J.C."/>
        </authorList>
    </citation>
    <scope>INDUCTION</scope>
</reference>
<sequence>MACHNVSELQDLGCSNQLLLQPLWDSIRTGEASARSPFFPVIFSIFTYLGFCLPFVVLDVLCPWVPILRRYKIHPDFSPSVRQLLPCLGLTLYQHLVFVFPVTLMHWARSPALLPREAPELSQLLSHVLICLLLFDTEIFAWHLLHHKVPWLYRTFHKVHHQNSSSFALATQYMSVWELLSLTFFDVLNVAMLQCHPLTILVFHVVNIWLSVEDHSGYDFPWSTHRLVPFGWYGGVAHHDLHHSQFNCNFAPYFTHWDKMLGTLRCAPHSKRLCAGSESCLDSGEQCTVHLNQKKKQT</sequence>
<gene>
    <name evidence="8" type="primary">Ch25h</name>
</gene>
<keyword id="KW-0256">Endoplasmic reticulum</keyword>
<keyword id="KW-0325">Glycoprotein</keyword>
<keyword id="KW-0408">Iron</keyword>
<keyword id="KW-0444">Lipid biosynthesis</keyword>
<keyword id="KW-0443">Lipid metabolism</keyword>
<keyword id="KW-0472">Membrane</keyword>
<keyword id="KW-0479">Metal-binding</keyword>
<keyword id="KW-0503">Monooxygenase</keyword>
<keyword id="KW-0560">Oxidoreductase</keyword>
<keyword id="KW-1185">Reference proteome</keyword>
<keyword id="KW-0752">Steroid biosynthesis</keyword>
<keyword id="KW-0753">Steroid metabolism</keyword>
<keyword id="KW-0756">Sterol biosynthesis</keyword>
<keyword id="KW-1207">Sterol metabolism</keyword>
<keyword id="KW-0812">Transmembrane</keyword>
<keyword id="KW-1133">Transmembrane helix</keyword>
<evidence type="ECO:0000250" key="1">
    <source>
        <dbReference type="UniProtKB" id="O95992"/>
    </source>
</evidence>
<evidence type="ECO:0000250" key="2">
    <source>
        <dbReference type="UniProtKB" id="Q9Z0F5"/>
    </source>
</evidence>
<evidence type="ECO:0000255" key="3"/>
<evidence type="ECO:0000269" key="4">
    <source>
    </source>
</evidence>
<evidence type="ECO:0000269" key="5">
    <source>
    </source>
</evidence>
<evidence type="ECO:0000269" key="6">
    <source>
    </source>
</evidence>
<evidence type="ECO:0000305" key="7"/>
<evidence type="ECO:0000312" key="8">
    <source>
        <dbReference type="RGD" id="1310575"/>
    </source>
</evidence>
<protein>
    <recommendedName>
        <fullName evidence="7">Cholesterol 25-hydroxylase</fullName>
        <ecNumber evidence="2">1.14.99.38</ecNumber>
    </recommendedName>
    <alternativeName>
        <fullName>Cholesterol 25-monooxygenase</fullName>
    </alternativeName>
</protein>
<feature type="chain" id="PRO_0000226804" description="Cholesterol 25-hydroxylase">
    <location>
        <begin position="1"/>
        <end position="298"/>
    </location>
</feature>
<feature type="transmembrane region" description="Helical" evidence="3">
    <location>
        <begin position="38"/>
        <end position="58"/>
    </location>
</feature>
<feature type="transmembrane region" description="Helical" evidence="3">
    <location>
        <begin position="84"/>
        <end position="104"/>
    </location>
</feature>
<feature type="transmembrane region" description="Helical" evidence="3">
    <location>
        <begin position="124"/>
        <end position="144"/>
    </location>
</feature>
<feature type="transmembrane region" description="Helical" evidence="3">
    <location>
        <begin position="167"/>
        <end position="187"/>
    </location>
</feature>
<feature type="transmembrane region" description="Helical" evidence="3">
    <location>
        <begin position="190"/>
        <end position="210"/>
    </location>
</feature>
<feature type="domain" description="Fatty acid hydroxylase" evidence="3">
    <location>
        <begin position="128"/>
        <end position="263"/>
    </location>
</feature>
<feature type="short sequence motif" description="Histidine box-1">
    <location>
        <begin position="142"/>
        <end position="146"/>
    </location>
</feature>
<feature type="short sequence motif" description="Histidine box-2">
    <location>
        <begin position="157"/>
        <end position="161"/>
    </location>
</feature>
<feature type="short sequence motif" description="Histidine box-3">
    <location>
        <begin position="238"/>
        <end position="244"/>
    </location>
</feature>
<feature type="glycosylation site" description="N-linked (GlcNAc...) asparagine" evidence="3">
    <location>
        <position position="5"/>
    </location>
</feature>
<feature type="glycosylation site" description="N-linked (GlcNAc...) asparagine" evidence="3">
    <location>
        <position position="163"/>
    </location>
</feature>